<organism>
    <name type="scientific">Homo sapiens</name>
    <name type="common">Human</name>
    <dbReference type="NCBI Taxonomy" id="9606"/>
    <lineage>
        <taxon>Eukaryota</taxon>
        <taxon>Metazoa</taxon>
        <taxon>Chordata</taxon>
        <taxon>Craniata</taxon>
        <taxon>Vertebrata</taxon>
        <taxon>Euteleostomi</taxon>
        <taxon>Mammalia</taxon>
        <taxon>Eutheria</taxon>
        <taxon>Euarchontoglires</taxon>
        <taxon>Primates</taxon>
        <taxon>Haplorrhini</taxon>
        <taxon>Catarrhini</taxon>
        <taxon>Hominidae</taxon>
        <taxon>Homo</taxon>
    </lineage>
</organism>
<accession>Q9H305</accession>
<accession>A8K7M1</accession>
<accession>B4DFU1</accession>
<accession>B4DY75</accession>
<accession>D3DUD6</accession>
<accession>Q96ID8</accession>
<accession>Q9H0Q4</accession>
<accession>Q9P112</accession>
<protein>
    <recommendedName>
        <fullName>Cell death-inducing p53-target protein 1</fullName>
    </recommendedName>
    <alternativeName>
        <fullName>Cell death involved p53-target</fullName>
    </alternativeName>
    <alternativeName>
        <fullName>Cell death-inducing protein</fullName>
    </alternativeName>
    <alternativeName>
        <fullName>LITAF-like protein</fullName>
    </alternativeName>
    <alternativeName>
        <fullName>Lipopolysaccharide-induced tumor necrosis factor-alpha-like protein</fullName>
    </alternativeName>
    <alternativeName>
        <fullName>Transmembrane protein I1</fullName>
    </alternativeName>
</protein>
<name>CDIP1_HUMAN</name>
<proteinExistence type="evidence at protein level"/>
<reference key="1">
    <citation type="journal article" date="1999" name="J. Hum. Genet.">
        <title>C16orf5, a novel proline-rich gene at 16p13.3, is highly expressed in the brain.</title>
        <authorList>
            <person name="Bhalla K."/>
            <person name="Eyre H.J."/>
            <person name="Whitmore S.A."/>
            <person name="Sutherland G.R."/>
            <person name="Callen D.F."/>
        </authorList>
    </citation>
    <scope>NUCLEOTIDE SEQUENCE [MRNA] (ISOFORM 1)</scope>
    <scope>TISSUE SPECIFICITY</scope>
    <source>
        <tissue>Brain</tissue>
    </source>
</reference>
<reference key="2">
    <citation type="submission" date="1999-10" db="EMBL/GenBank/DDBJ databases">
        <title>Cloning a novel human cDNA encoding a novel transmembrane protein.</title>
        <authorList>
            <person name="Zhou Y."/>
            <person name="Du G."/>
            <person name="Wang J."/>
            <person name="Yuan J."/>
            <person name="Qiang B."/>
        </authorList>
    </citation>
    <scope>NUCLEOTIDE SEQUENCE [MRNA] (ISOFORM 1)</scope>
</reference>
<reference key="3">
    <citation type="journal article" date="2007" name="EMBO J.">
        <title>CDIP, a novel pro-apoptotic gene, regulates TNFalpha-mediated apoptosis in a p53-dependent manner.</title>
        <authorList>
            <person name="Brown L."/>
            <person name="Ongusaha P.P."/>
            <person name="Kim H.G."/>
            <person name="Nuti S."/>
            <person name="Mandinova A."/>
            <person name="Lee J.W."/>
            <person name="Khosravi-Far R."/>
            <person name="Aaronson S.A."/>
            <person name="Lee S.W."/>
        </authorList>
    </citation>
    <scope>NUCLEOTIDE SEQUENCE [MRNA] (ISOFORM 1)</scope>
    <scope>INDUCTION</scope>
    <scope>FUNCTION</scope>
</reference>
<reference key="4">
    <citation type="journal article" date="2001" name="Genome Res.">
        <title>Towards a catalog of human genes and proteins: sequencing and analysis of 500 novel complete protein coding human cDNAs.</title>
        <authorList>
            <person name="Wiemann S."/>
            <person name="Weil B."/>
            <person name="Wellenreuther R."/>
            <person name="Gassenhuber J."/>
            <person name="Glassl S."/>
            <person name="Ansorge W."/>
            <person name="Boecher M."/>
            <person name="Bloecker H."/>
            <person name="Bauersachs S."/>
            <person name="Blum H."/>
            <person name="Lauber J."/>
            <person name="Duesterhoeft A."/>
            <person name="Beyer A."/>
            <person name="Koehrer K."/>
            <person name="Strack N."/>
            <person name="Mewes H.-W."/>
            <person name="Ottenwaelder B."/>
            <person name="Obermaier B."/>
            <person name="Tampe J."/>
            <person name="Heubner D."/>
            <person name="Wambutt R."/>
            <person name="Korn B."/>
            <person name="Klein M."/>
            <person name="Poustka A."/>
        </authorList>
    </citation>
    <scope>NUCLEOTIDE SEQUENCE [LARGE SCALE MRNA] (ISOFORM 1)</scope>
    <source>
        <tissue>Brain</tissue>
    </source>
</reference>
<reference key="5">
    <citation type="submission" date="2004-06" db="EMBL/GenBank/DDBJ databases">
        <title>Cloning of human full open reading frames in Gateway(TM) system entry vector (pDONR201).</title>
        <authorList>
            <person name="Ebert L."/>
            <person name="Schick M."/>
            <person name="Neubert P."/>
            <person name="Schatten R."/>
            <person name="Henze S."/>
            <person name="Korn B."/>
        </authorList>
    </citation>
    <scope>NUCLEOTIDE SEQUENCE [LARGE SCALE MRNA] (ISOFORM 1)</scope>
</reference>
<reference key="6">
    <citation type="journal article" date="2004" name="Nat. Genet.">
        <title>Complete sequencing and characterization of 21,243 full-length human cDNAs.</title>
        <authorList>
            <person name="Ota T."/>
            <person name="Suzuki Y."/>
            <person name="Nishikawa T."/>
            <person name="Otsuki T."/>
            <person name="Sugiyama T."/>
            <person name="Irie R."/>
            <person name="Wakamatsu A."/>
            <person name="Hayashi K."/>
            <person name="Sato H."/>
            <person name="Nagai K."/>
            <person name="Kimura K."/>
            <person name="Makita H."/>
            <person name="Sekine M."/>
            <person name="Obayashi M."/>
            <person name="Nishi T."/>
            <person name="Shibahara T."/>
            <person name="Tanaka T."/>
            <person name="Ishii S."/>
            <person name="Yamamoto J."/>
            <person name="Saito K."/>
            <person name="Kawai Y."/>
            <person name="Isono Y."/>
            <person name="Nakamura Y."/>
            <person name="Nagahari K."/>
            <person name="Murakami K."/>
            <person name="Yasuda T."/>
            <person name="Iwayanagi T."/>
            <person name="Wagatsuma M."/>
            <person name="Shiratori A."/>
            <person name="Sudo H."/>
            <person name="Hosoiri T."/>
            <person name="Kaku Y."/>
            <person name="Kodaira H."/>
            <person name="Kondo H."/>
            <person name="Sugawara M."/>
            <person name="Takahashi M."/>
            <person name="Kanda K."/>
            <person name="Yokoi T."/>
            <person name="Furuya T."/>
            <person name="Kikkawa E."/>
            <person name="Omura Y."/>
            <person name="Abe K."/>
            <person name="Kamihara K."/>
            <person name="Katsuta N."/>
            <person name="Sato K."/>
            <person name="Tanikawa M."/>
            <person name="Yamazaki M."/>
            <person name="Ninomiya K."/>
            <person name="Ishibashi T."/>
            <person name="Yamashita H."/>
            <person name="Murakawa K."/>
            <person name="Fujimori K."/>
            <person name="Tanai H."/>
            <person name="Kimata M."/>
            <person name="Watanabe M."/>
            <person name="Hiraoka S."/>
            <person name="Chiba Y."/>
            <person name="Ishida S."/>
            <person name="Ono Y."/>
            <person name="Takiguchi S."/>
            <person name="Watanabe S."/>
            <person name="Yosida M."/>
            <person name="Hotuta T."/>
            <person name="Kusano J."/>
            <person name="Kanehori K."/>
            <person name="Takahashi-Fujii A."/>
            <person name="Hara H."/>
            <person name="Tanase T.-O."/>
            <person name="Nomura Y."/>
            <person name="Togiya S."/>
            <person name="Komai F."/>
            <person name="Hara R."/>
            <person name="Takeuchi K."/>
            <person name="Arita M."/>
            <person name="Imose N."/>
            <person name="Musashino K."/>
            <person name="Yuuki H."/>
            <person name="Oshima A."/>
            <person name="Sasaki N."/>
            <person name="Aotsuka S."/>
            <person name="Yoshikawa Y."/>
            <person name="Matsunawa H."/>
            <person name="Ichihara T."/>
            <person name="Shiohata N."/>
            <person name="Sano S."/>
            <person name="Moriya S."/>
            <person name="Momiyama H."/>
            <person name="Satoh N."/>
            <person name="Takami S."/>
            <person name="Terashima Y."/>
            <person name="Suzuki O."/>
            <person name="Nakagawa S."/>
            <person name="Senoh A."/>
            <person name="Mizoguchi H."/>
            <person name="Goto Y."/>
            <person name="Shimizu F."/>
            <person name="Wakebe H."/>
            <person name="Hishigaki H."/>
            <person name="Watanabe T."/>
            <person name="Sugiyama A."/>
            <person name="Takemoto M."/>
            <person name="Kawakami B."/>
            <person name="Yamazaki M."/>
            <person name="Watanabe K."/>
            <person name="Kumagai A."/>
            <person name="Itakura S."/>
            <person name="Fukuzumi Y."/>
            <person name="Fujimori Y."/>
            <person name="Komiyama M."/>
            <person name="Tashiro H."/>
            <person name="Tanigami A."/>
            <person name="Fujiwara T."/>
            <person name="Ono T."/>
            <person name="Yamada K."/>
            <person name="Fujii Y."/>
            <person name="Ozaki K."/>
            <person name="Hirao M."/>
            <person name="Ohmori Y."/>
            <person name="Kawabata A."/>
            <person name="Hikiji T."/>
            <person name="Kobatake N."/>
            <person name="Inagaki H."/>
            <person name="Ikema Y."/>
            <person name="Okamoto S."/>
            <person name="Okitani R."/>
            <person name="Kawakami T."/>
            <person name="Noguchi S."/>
            <person name="Itoh T."/>
            <person name="Shigeta K."/>
            <person name="Senba T."/>
            <person name="Matsumura K."/>
            <person name="Nakajima Y."/>
            <person name="Mizuno T."/>
            <person name="Morinaga M."/>
            <person name="Sasaki M."/>
            <person name="Togashi T."/>
            <person name="Oyama M."/>
            <person name="Hata H."/>
            <person name="Watanabe M."/>
            <person name="Komatsu T."/>
            <person name="Mizushima-Sugano J."/>
            <person name="Satoh T."/>
            <person name="Shirai Y."/>
            <person name="Takahashi Y."/>
            <person name="Nakagawa K."/>
            <person name="Okumura K."/>
            <person name="Nagase T."/>
            <person name="Nomura N."/>
            <person name="Kikuchi H."/>
            <person name="Masuho Y."/>
            <person name="Yamashita R."/>
            <person name="Nakai K."/>
            <person name="Yada T."/>
            <person name="Nakamura Y."/>
            <person name="Ohara O."/>
            <person name="Isogai T."/>
            <person name="Sugano S."/>
        </authorList>
    </citation>
    <scope>NUCLEOTIDE SEQUENCE [LARGE SCALE MRNA] (ISOFORMS 1; 2 AND 3)</scope>
    <source>
        <tissue>Amygdala</tissue>
        <tissue>Spleen</tissue>
        <tissue>Testis</tissue>
    </source>
</reference>
<reference key="7">
    <citation type="journal article" date="2004" name="Nature">
        <title>The sequence and analysis of duplication-rich human chromosome 16.</title>
        <authorList>
            <person name="Martin J."/>
            <person name="Han C."/>
            <person name="Gordon L.A."/>
            <person name="Terry A."/>
            <person name="Prabhakar S."/>
            <person name="She X."/>
            <person name="Xie G."/>
            <person name="Hellsten U."/>
            <person name="Chan Y.M."/>
            <person name="Altherr M."/>
            <person name="Couronne O."/>
            <person name="Aerts A."/>
            <person name="Bajorek E."/>
            <person name="Black S."/>
            <person name="Blumer H."/>
            <person name="Branscomb E."/>
            <person name="Brown N.C."/>
            <person name="Bruno W.J."/>
            <person name="Buckingham J.M."/>
            <person name="Callen D.F."/>
            <person name="Campbell C.S."/>
            <person name="Campbell M.L."/>
            <person name="Campbell E.W."/>
            <person name="Caoile C."/>
            <person name="Challacombe J.F."/>
            <person name="Chasteen L.A."/>
            <person name="Chertkov O."/>
            <person name="Chi H.C."/>
            <person name="Christensen M."/>
            <person name="Clark L.M."/>
            <person name="Cohn J.D."/>
            <person name="Denys M."/>
            <person name="Detter J.C."/>
            <person name="Dickson M."/>
            <person name="Dimitrijevic-Bussod M."/>
            <person name="Escobar J."/>
            <person name="Fawcett J.J."/>
            <person name="Flowers D."/>
            <person name="Fotopulos D."/>
            <person name="Glavina T."/>
            <person name="Gomez M."/>
            <person name="Gonzales E."/>
            <person name="Goodstein D."/>
            <person name="Goodwin L.A."/>
            <person name="Grady D.L."/>
            <person name="Grigoriev I."/>
            <person name="Groza M."/>
            <person name="Hammon N."/>
            <person name="Hawkins T."/>
            <person name="Haydu L."/>
            <person name="Hildebrand C.E."/>
            <person name="Huang W."/>
            <person name="Israni S."/>
            <person name="Jett J."/>
            <person name="Jewett P.B."/>
            <person name="Kadner K."/>
            <person name="Kimball H."/>
            <person name="Kobayashi A."/>
            <person name="Krawczyk M.-C."/>
            <person name="Leyba T."/>
            <person name="Longmire J.L."/>
            <person name="Lopez F."/>
            <person name="Lou Y."/>
            <person name="Lowry S."/>
            <person name="Ludeman T."/>
            <person name="Manohar C.F."/>
            <person name="Mark G.A."/>
            <person name="McMurray K.L."/>
            <person name="Meincke L.J."/>
            <person name="Morgan J."/>
            <person name="Moyzis R.K."/>
            <person name="Mundt M.O."/>
            <person name="Munk A.C."/>
            <person name="Nandkeshwar R.D."/>
            <person name="Pitluck S."/>
            <person name="Pollard M."/>
            <person name="Predki P."/>
            <person name="Parson-Quintana B."/>
            <person name="Ramirez L."/>
            <person name="Rash S."/>
            <person name="Retterer J."/>
            <person name="Ricke D.O."/>
            <person name="Robinson D.L."/>
            <person name="Rodriguez A."/>
            <person name="Salamov A."/>
            <person name="Saunders E.H."/>
            <person name="Scott D."/>
            <person name="Shough T."/>
            <person name="Stallings R.L."/>
            <person name="Stalvey M."/>
            <person name="Sutherland R.D."/>
            <person name="Tapia R."/>
            <person name="Tesmer J.G."/>
            <person name="Thayer N."/>
            <person name="Thompson L.S."/>
            <person name="Tice H."/>
            <person name="Torney D.C."/>
            <person name="Tran-Gyamfi M."/>
            <person name="Tsai M."/>
            <person name="Ulanovsky L.E."/>
            <person name="Ustaszewska A."/>
            <person name="Vo N."/>
            <person name="White P.S."/>
            <person name="Williams A.L."/>
            <person name="Wills P.L."/>
            <person name="Wu J.-R."/>
            <person name="Wu K."/>
            <person name="Yang J."/>
            <person name="DeJong P."/>
            <person name="Bruce D."/>
            <person name="Doggett N.A."/>
            <person name="Deaven L."/>
            <person name="Schmutz J."/>
            <person name="Grimwood J."/>
            <person name="Richardson P."/>
            <person name="Rokhsar D.S."/>
            <person name="Eichler E.E."/>
            <person name="Gilna P."/>
            <person name="Lucas S.M."/>
            <person name="Myers R.M."/>
            <person name="Rubin E.M."/>
            <person name="Pennacchio L.A."/>
        </authorList>
    </citation>
    <scope>NUCLEOTIDE SEQUENCE [LARGE SCALE GENOMIC DNA]</scope>
</reference>
<reference key="8">
    <citation type="journal article" date="2007" name="BMC Genomics">
        <title>The full-ORF clone resource of the German cDNA consortium.</title>
        <authorList>
            <person name="Bechtel S."/>
            <person name="Rosenfelder H."/>
            <person name="Duda A."/>
            <person name="Schmidt C.P."/>
            <person name="Ernst U."/>
            <person name="Wellenreuther R."/>
            <person name="Mehrle A."/>
            <person name="Schuster C."/>
            <person name="Bahr A."/>
            <person name="Bloecker H."/>
            <person name="Heubner D."/>
            <person name="Hoerlein A."/>
            <person name="Michel G."/>
            <person name="Wedler H."/>
            <person name="Koehrer K."/>
            <person name="Ottenwaelder B."/>
            <person name="Poustka A."/>
            <person name="Wiemann S."/>
            <person name="Schupp I."/>
        </authorList>
    </citation>
    <scope>NUCLEOTIDE SEQUENCE [LARGE SCALE MRNA] (ISOFORM 1)</scope>
    <source>
        <tissue>Amygdala</tissue>
    </source>
</reference>
<reference key="9">
    <citation type="submission" date="2005-09" db="EMBL/GenBank/DDBJ databases">
        <authorList>
            <person name="Mural R.J."/>
            <person name="Istrail S."/>
            <person name="Sutton G.G."/>
            <person name="Florea L."/>
            <person name="Halpern A.L."/>
            <person name="Mobarry C.M."/>
            <person name="Lippert R."/>
            <person name="Walenz B."/>
            <person name="Shatkay H."/>
            <person name="Dew I."/>
            <person name="Miller J.R."/>
            <person name="Flanigan M.J."/>
            <person name="Edwards N.J."/>
            <person name="Bolanos R."/>
            <person name="Fasulo D."/>
            <person name="Halldorsson B.V."/>
            <person name="Hannenhalli S."/>
            <person name="Turner R."/>
            <person name="Yooseph S."/>
            <person name="Lu F."/>
            <person name="Nusskern D.R."/>
            <person name="Shue B.C."/>
            <person name="Zheng X.H."/>
            <person name="Zhong F."/>
            <person name="Delcher A.L."/>
            <person name="Huson D.H."/>
            <person name="Kravitz S.A."/>
            <person name="Mouchard L."/>
            <person name="Reinert K."/>
            <person name="Remington K.A."/>
            <person name="Clark A.G."/>
            <person name="Waterman M.S."/>
            <person name="Eichler E.E."/>
            <person name="Adams M.D."/>
            <person name="Hunkapiller M.W."/>
            <person name="Myers E.W."/>
            <person name="Venter J.C."/>
        </authorList>
    </citation>
    <scope>NUCLEOTIDE SEQUENCE [LARGE SCALE GENOMIC DNA]</scope>
</reference>
<reference key="10">
    <citation type="journal article" date="2004" name="Genome Res.">
        <title>The status, quality, and expansion of the NIH full-length cDNA project: the Mammalian Gene Collection (MGC).</title>
        <authorList>
            <consortium name="The MGC Project Team"/>
        </authorList>
    </citation>
    <scope>NUCLEOTIDE SEQUENCE [LARGE SCALE MRNA] (ISOFORM 1)</scope>
    <source>
        <tissue>Eye</tissue>
        <tissue>Lung</tissue>
    </source>
</reference>
<reference key="11">
    <citation type="journal article" date="2016" name="Biochem. J.">
        <title>The Charcot Marie Tooth disease protein LITAF is a zinc-binding monotopic membrane protein.</title>
        <authorList>
            <person name="Qin W."/>
            <person name="Wunderley L."/>
            <person name="Barrett A.L."/>
            <person name="High S."/>
            <person name="Woodman P.G."/>
        </authorList>
    </citation>
    <scope>SUBCELLULAR LOCATION</scope>
    <scope>TOPOLOGY</scope>
</reference>
<dbReference type="EMBL" id="AF131218">
    <property type="protein sequence ID" value="AAF26619.1"/>
    <property type="status" value="ALT_FRAME"/>
    <property type="molecule type" value="mRNA"/>
</dbReference>
<dbReference type="EMBL" id="AF195661">
    <property type="protein sequence ID" value="AAG35583.1"/>
    <property type="molecule type" value="mRNA"/>
</dbReference>
<dbReference type="EMBL" id="DQ167023">
    <property type="protein sequence ID" value="AAZ94626.1"/>
    <property type="molecule type" value="mRNA"/>
</dbReference>
<dbReference type="EMBL" id="AL136698">
    <property type="protein sequence ID" value="CAB66633.1"/>
    <property type="molecule type" value="mRNA"/>
</dbReference>
<dbReference type="EMBL" id="CR533446">
    <property type="protein sequence ID" value="CAG38477.1"/>
    <property type="molecule type" value="mRNA"/>
</dbReference>
<dbReference type="EMBL" id="AK292036">
    <property type="protein sequence ID" value="BAF84725.1"/>
    <property type="molecule type" value="mRNA"/>
</dbReference>
<dbReference type="EMBL" id="AK294257">
    <property type="protein sequence ID" value="BAG57552.1"/>
    <property type="molecule type" value="mRNA"/>
</dbReference>
<dbReference type="EMBL" id="AK302297">
    <property type="protein sequence ID" value="BAG63637.1"/>
    <property type="molecule type" value="mRNA"/>
</dbReference>
<dbReference type="EMBL" id="AL833853">
    <property type="protein sequence ID" value="CAD38712.1"/>
    <property type="molecule type" value="mRNA"/>
</dbReference>
<dbReference type="EMBL" id="AC007606">
    <property type="status" value="NOT_ANNOTATED_CDS"/>
    <property type="molecule type" value="Genomic_DNA"/>
</dbReference>
<dbReference type="EMBL" id="AC023830">
    <property type="status" value="NOT_ANNOTATED_CDS"/>
    <property type="molecule type" value="Genomic_DNA"/>
</dbReference>
<dbReference type="EMBL" id="CH471112">
    <property type="protein sequence ID" value="EAW85291.1"/>
    <property type="molecule type" value="Genomic_DNA"/>
</dbReference>
<dbReference type="EMBL" id="CH471112">
    <property type="protein sequence ID" value="EAW85292.1"/>
    <property type="molecule type" value="Genomic_DNA"/>
</dbReference>
<dbReference type="EMBL" id="CH471112">
    <property type="protein sequence ID" value="EAW85293.1"/>
    <property type="molecule type" value="Genomic_DNA"/>
</dbReference>
<dbReference type="EMBL" id="CH471112">
    <property type="protein sequence ID" value="EAW85294.1"/>
    <property type="molecule type" value="Genomic_DNA"/>
</dbReference>
<dbReference type="EMBL" id="CH471112">
    <property type="protein sequence ID" value="EAW85296.1"/>
    <property type="molecule type" value="Genomic_DNA"/>
</dbReference>
<dbReference type="EMBL" id="BC002882">
    <property type="protein sequence ID" value="AAH02882.1"/>
    <property type="molecule type" value="mRNA"/>
</dbReference>
<dbReference type="EMBL" id="BC007604">
    <property type="protein sequence ID" value="AAH07604.1"/>
    <property type="molecule type" value="mRNA"/>
</dbReference>
<dbReference type="CCDS" id="CCDS42114.1">
    <molecule id="Q9H305-1"/>
</dbReference>
<dbReference type="CCDS" id="CCDS58419.1">
    <molecule id="Q9H305-2"/>
</dbReference>
<dbReference type="CCDS" id="CCDS58420.1">
    <molecule id="Q9H305-3"/>
</dbReference>
<dbReference type="RefSeq" id="NP_001185983.1">
    <molecule id="Q9H305-1"/>
    <property type="nucleotide sequence ID" value="NM_001199054.2"/>
</dbReference>
<dbReference type="RefSeq" id="NP_001185984.1">
    <molecule id="Q9H305-2"/>
    <property type="nucleotide sequence ID" value="NM_001199055.2"/>
</dbReference>
<dbReference type="RefSeq" id="NP_001185985.1">
    <molecule id="Q9H305-3"/>
    <property type="nucleotide sequence ID" value="NM_001199056.2"/>
</dbReference>
<dbReference type="RefSeq" id="NP_037531.2">
    <molecule id="Q9H305-1"/>
    <property type="nucleotide sequence ID" value="NM_013399.3"/>
</dbReference>
<dbReference type="RefSeq" id="XP_047289999.1">
    <molecule id="Q9H305-1"/>
    <property type="nucleotide sequence ID" value="XM_047434043.1"/>
</dbReference>
<dbReference type="RefSeq" id="XP_047290000.1">
    <molecule id="Q9H305-1"/>
    <property type="nucleotide sequence ID" value="XM_047434044.1"/>
</dbReference>
<dbReference type="RefSeq" id="XP_054236172.1">
    <molecule id="Q9H305-1"/>
    <property type="nucleotide sequence ID" value="XM_054380197.1"/>
</dbReference>
<dbReference type="RefSeq" id="XP_054236173.1">
    <molecule id="Q9H305-1"/>
    <property type="nucleotide sequence ID" value="XM_054380198.1"/>
</dbReference>
<dbReference type="BioGRID" id="118998">
    <property type="interactions" value="18"/>
</dbReference>
<dbReference type="FunCoup" id="Q9H305">
    <property type="interactions" value="322"/>
</dbReference>
<dbReference type="IntAct" id="Q9H305">
    <property type="interactions" value="18"/>
</dbReference>
<dbReference type="MINT" id="Q9H305"/>
<dbReference type="STRING" id="9606.ENSP00000382508"/>
<dbReference type="GlyGen" id="Q9H305">
    <property type="glycosylation" value="2 sites"/>
</dbReference>
<dbReference type="iPTMnet" id="Q9H305"/>
<dbReference type="PhosphoSitePlus" id="Q9H305"/>
<dbReference type="SwissPalm" id="Q9H305"/>
<dbReference type="BioMuta" id="CDIP1"/>
<dbReference type="DMDM" id="74733567"/>
<dbReference type="jPOST" id="Q9H305"/>
<dbReference type="MassIVE" id="Q9H305"/>
<dbReference type="PaxDb" id="9606-ENSP00000382508"/>
<dbReference type="PeptideAtlas" id="Q9H305"/>
<dbReference type="ProteomicsDB" id="4079"/>
<dbReference type="ProteomicsDB" id="5503"/>
<dbReference type="ProteomicsDB" id="80639">
    <molecule id="Q9H305-1"/>
</dbReference>
<dbReference type="Pumba" id="Q9H305"/>
<dbReference type="Antibodypedia" id="24347">
    <property type="antibodies" value="74 antibodies from 21 providers"/>
</dbReference>
<dbReference type="DNASU" id="29965"/>
<dbReference type="Ensembl" id="ENST00000399599.7">
    <molecule id="Q9H305-1"/>
    <property type="protein sequence ID" value="ENSP00000382508.2"/>
    <property type="gene ID" value="ENSG00000089486.17"/>
</dbReference>
<dbReference type="Ensembl" id="ENST00000562334.5">
    <molecule id="Q9H305-3"/>
    <property type="protein sequence ID" value="ENSP00000455050.1"/>
    <property type="gene ID" value="ENSG00000089486.17"/>
</dbReference>
<dbReference type="Ensembl" id="ENST00000563332.6">
    <molecule id="Q9H305-1"/>
    <property type="protein sequence ID" value="ENSP00000454994.1"/>
    <property type="gene ID" value="ENSG00000089486.17"/>
</dbReference>
<dbReference type="Ensembl" id="ENST00000563507.5">
    <molecule id="Q9H305-2"/>
    <property type="protein sequence ID" value="ENSP00000455462.1"/>
    <property type="gene ID" value="ENSG00000089486.17"/>
</dbReference>
<dbReference type="Ensembl" id="ENST00000567695.6">
    <molecule id="Q9H305-1"/>
    <property type="protein sequence ID" value="ENSP00000457877.1"/>
    <property type="gene ID" value="ENSG00000089486.17"/>
</dbReference>
<dbReference type="Ensembl" id="ENST00000611166.2">
    <molecule id="Q9H305-1"/>
    <property type="protein sequence ID" value="ENSP00000480842.1"/>
    <property type="gene ID" value="ENSG00000274336.2"/>
</dbReference>
<dbReference type="Ensembl" id="ENST00000631859.1">
    <molecule id="Q9H305-3"/>
    <property type="protein sequence ID" value="ENSP00000488843.1"/>
    <property type="gene ID" value="ENSG00000274336.2"/>
</dbReference>
<dbReference type="Ensembl" id="ENST00000632680.1">
    <molecule id="Q9H305-1"/>
    <property type="protein sequence ID" value="ENSP00000488474.1"/>
    <property type="gene ID" value="ENSG00000274336.2"/>
</dbReference>
<dbReference type="Ensembl" id="ENST00000632937.1">
    <molecule id="Q9H305-1"/>
    <property type="protein sequence ID" value="ENSP00000488066.1"/>
    <property type="gene ID" value="ENSG00000274336.2"/>
</dbReference>
<dbReference type="Ensembl" id="ENST00000633324.1">
    <molecule id="Q9H305-2"/>
    <property type="protein sequence ID" value="ENSP00000487657.1"/>
    <property type="gene ID" value="ENSG00000274336.2"/>
</dbReference>
<dbReference type="GeneID" id="29965"/>
<dbReference type="KEGG" id="hsa:29965"/>
<dbReference type="MANE-Select" id="ENST00000567695.6">
    <property type="protein sequence ID" value="ENSP00000457877.1"/>
    <property type="RefSeq nucleotide sequence ID" value="NM_013399.3"/>
    <property type="RefSeq protein sequence ID" value="NP_037531.2"/>
</dbReference>
<dbReference type="UCSC" id="uc002cwu.4">
    <molecule id="Q9H305-1"/>
    <property type="organism name" value="human"/>
</dbReference>
<dbReference type="AGR" id="HGNC:13234"/>
<dbReference type="CTD" id="29965"/>
<dbReference type="DisGeNET" id="29965"/>
<dbReference type="GeneCards" id="CDIP1"/>
<dbReference type="HGNC" id="HGNC:13234">
    <property type="gene designation" value="CDIP1"/>
</dbReference>
<dbReference type="HPA" id="ENSG00000089486">
    <property type="expression patterns" value="Tissue enhanced (brain)"/>
</dbReference>
<dbReference type="MIM" id="610503">
    <property type="type" value="gene"/>
</dbReference>
<dbReference type="neXtProt" id="NX_Q9H305"/>
<dbReference type="OpenTargets" id="ENSG00000089486"/>
<dbReference type="PharmGKB" id="PA134879441"/>
<dbReference type="VEuPathDB" id="HostDB:ENSG00000089486"/>
<dbReference type="eggNOG" id="ENOG502S2GM">
    <property type="taxonomic scope" value="Eukaryota"/>
</dbReference>
<dbReference type="GeneTree" id="ENSGT00940000157696"/>
<dbReference type="HOGENOM" id="CLU_095549_0_0_1"/>
<dbReference type="InParanoid" id="Q9H305"/>
<dbReference type="OMA" id="YTYKRVC"/>
<dbReference type="OrthoDB" id="5599753at2759"/>
<dbReference type="PAN-GO" id="Q9H305">
    <property type="GO annotations" value="6 GO annotations based on evolutionary models"/>
</dbReference>
<dbReference type="PhylomeDB" id="Q9H305"/>
<dbReference type="TreeFam" id="TF313294"/>
<dbReference type="PathwayCommons" id="Q9H305"/>
<dbReference type="SignaLink" id="Q9H305"/>
<dbReference type="BioGRID-ORCS" id="29965">
    <property type="hits" value="11 hits in 1168 CRISPR screens"/>
</dbReference>
<dbReference type="ChiTaRS" id="CDIP1">
    <property type="organism name" value="human"/>
</dbReference>
<dbReference type="GenomeRNAi" id="29965"/>
<dbReference type="Pharos" id="Q9H305">
    <property type="development level" value="Tbio"/>
</dbReference>
<dbReference type="PRO" id="PR:Q9H305"/>
<dbReference type="Proteomes" id="UP000005640">
    <property type="component" value="Chromosome 16"/>
</dbReference>
<dbReference type="RNAct" id="Q9H305">
    <property type="molecule type" value="protein"/>
</dbReference>
<dbReference type="Bgee" id="ENSG00000089486">
    <property type="expression patterns" value="Expressed in prefrontal cortex and 99 other cell types or tissues"/>
</dbReference>
<dbReference type="ExpressionAtlas" id="Q9H305">
    <property type="expression patterns" value="baseline and differential"/>
</dbReference>
<dbReference type="GO" id="GO:0098560">
    <property type="term" value="C:cytoplasmic side of late endosome membrane"/>
    <property type="evidence" value="ECO:0000314"/>
    <property type="project" value="UniProtKB"/>
</dbReference>
<dbReference type="GO" id="GO:0098574">
    <property type="term" value="C:cytoplasmic side of lysosomal membrane"/>
    <property type="evidence" value="ECO:0000314"/>
    <property type="project" value="UniProtKB"/>
</dbReference>
<dbReference type="GO" id="GO:0005634">
    <property type="term" value="C:nucleus"/>
    <property type="evidence" value="ECO:0000314"/>
    <property type="project" value="MGI"/>
</dbReference>
<dbReference type="GO" id="GO:0008270">
    <property type="term" value="F:zinc ion binding"/>
    <property type="evidence" value="ECO:0000318"/>
    <property type="project" value="GO_Central"/>
</dbReference>
<dbReference type="GO" id="GO:0042771">
    <property type="term" value="P:intrinsic apoptotic signaling pathway in response to DNA damage by p53 class mediator"/>
    <property type="evidence" value="ECO:0000315"/>
    <property type="project" value="MGI"/>
</dbReference>
<dbReference type="InterPro" id="IPR006629">
    <property type="entry name" value="LITAF"/>
</dbReference>
<dbReference type="InterPro" id="IPR037519">
    <property type="entry name" value="LITAF_fam"/>
</dbReference>
<dbReference type="PANTHER" id="PTHR23292:SF7">
    <property type="entry name" value="CELL DEATH-INDUCING P53-TARGET PROTEIN 1"/>
    <property type="match status" value="1"/>
</dbReference>
<dbReference type="PANTHER" id="PTHR23292">
    <property type="entry name" value="LIPOPOLYSACCHARIDE-INDUCED TUMOR NECROSIS FACTOR-ALPHA FACTOR"/>
    <property type="match status" value="1"/>
</dbReference>
<dbReference type="Pfam" id="PF10601">
    <property type="entry name" value="zf-LITAF-like"/>
    <property type="match status" value="1"/>
</dbReference>
<dbReference type="SMART" id="SM00714">
    <property type="entry name" value="LITAF"/>
    <property type="match status" value="1"/>
</dbReference>
<dbReference type="PROSITE" id="PS51837">
    <property type="entry name" value="LITAF"/>
    <property type="match status" value="1"/>
</dbReference>
<comment type="function">
    <text evidence="5">Acts as an important p53/TP53-apoptotic effector. Regulates TNF-alpha-mediated apoptosis in a p53/TP53-dependent manner.</text>
</comment>
<comment type="interaction">
    <interactant intactId="EBI-2876678">
        <id>Q9H305</id>
    </interactant>
    <interactant intactId="EBI-740086">
        <id>Q96GG9</id>
        <label>DCUN1D1</label>
    </interactant>
    <organismsDiffer>false</organismsDiffer>
    <experiments>3</experiments>
</comment>
<comment type="interaction">
    <interactant intactId="EBI-2876678">
        <id>Q9H305</id>
    </interactant>
    <interactant intactId="EBI-2806959">
        <id>Q6ICB0</id>
        <label>DESI1</label>
    </interactant>
    <organismsDiffer>false</organismsDiffer>
    <experiments>4</experiments>
</comment>
<comment type="interaction">
    <interactant intactId="EBI-2876678">
        <id>Q9H305</id>
    </interactant>
    <interactant intactId="EBI-12135243">
        <id>O95208-2</id>
        <label>EPN2</label>
    </interactant>
    <organismsDiffer>false</organismsDiffer>
    <experiments>3</experiments>
</comment>
<comment type="interaction">
    <interactant intactId="EBI-2876678">
        <id>Q9H305</id>
    </interactant>
    <interactant intactId="EBI-8070286">
        <id>O43561-2</id>
        <label>LAT</label>
    </interactant>
    <organismsDiffer>false</organismsDiffer>
    <experiments>3</experiments>
</comment>
<comment type="interaction">
    <interactant intactId="EBI-2876678">
        <id>Q9H305</id>
    </interactant>
    <interactant intactId="EBI-746259">
        <id>Q96DC9</id>
        <label>OTUB2</label>
    </interactant>
    <organismsDiffer>false</organismsDiffer>
    <experiments>3</experiments>
</comment>
<comment type="interaction">
    <interactant intactId="EBI-2876678">
        <id>Q9H305</id>
    </interactant>
    <interactant intactId="EBI-527784">
        <id>Q6GQQ9</id>
        <label>OTUD7B</label>
    </interactant>
    <organismsDiffer>false</organismsDiffer>
    <experiments>3</experiments>
</comment>
<comment type="interaction">
    <interactant intactId="EBI-2876678">
        <id>Q9H305</id>
    </interactant>
    <interactant intactId="EBI-357849">
        <id>Q15025</id>
        <label>TNIP1</label>
    </interactant>
    <organismsDiffer>false</organismsDiffer>
    <experiments>4</experiments>
</comment>
<comment type="interaction">
    <interactant intactId="EBI-2876678">
        <id>Q9H305</id>
    </interactant>
    <interactant intactId="EBI-74615">
        <id>Q9H0E2</id>
        <label>TOLLIP</label>
    </interactant>
    <organismsDiffer>false</organismsDiffer>
    <experiments>3</experiments>
</comment>
<comment type="interaction">
    <interactant intactId="EBI-2876678">
        <id>Q9H305</id>
    </interactant>
    <interactant intactId="EBI-413034">
        <id>P0CG47</id>
        <label>UBB</label>
    </interactant>
    <organismsDiffer>false</organismsDiffer>
    <experiments>3</experiments>
</comment>
<comment type="interaction">
    <interactant intactId="EBI-2876678">
        <id>Q9H305</id>
    </interactant>
    <interactant intactId="EBI-3390054">
        <id>P0CG48</id>
        <label>UBC</label>
    </interactant>
    <organismsDiffer>false</organismsDiffer>
    <experiments>3</experiments>
</comment>
<comment type="interaction">
    <interactant intactId="EBI-2876678">
        <id>Q9H305</id>
    </interactant>
    <interactant intactId="EBI-741480">
        <id>Q9UMX0</id>
        <label>UBQLN1</label>
    </interactant>
    <organismsDiffer>false</organismsDiffer>
    <experiments>3</experiments>
</comment>
<comment type="interaction">
    <interactant intactId="EBI-2876678">
        <id>Q9H305</id>
    </interactant>
    <interactant intactId="EBI-947187">
        <id>Q9UHD9</id>
        <label>UBQLN2</label>
    </interactant>
    <organismsDiffer>false</organismsDiffer>
    <experiments>3</experiments>
</comment>
<comment type="subcellular location">
    <subcellularLocation>
        <location evidence="6">Late endosome membrane</location>
        <topology evidence="6">Peripheral membrane protein</topology>
        <orientation evidence="6">Cytoplasmic side</orientation>
    </subcellularLocation>
    <subcellularLocation>
        <location evidence="6">Lysosome membrane</location>
        <topology evidence="6">Peripheral membrane protein</topology>
        <orientation evidence="6">Cytoplasmic side</orientation>
    </subcellularLocation>
</comment>
<comment type="alternative products">
    <event type="alternative splicing"/>
    <isoform>
        <id>Q9H305-1</id>
        <name>1</name>
        <sequence type="displayed"/>
    </isoform>
    <isoform>
        <id>Q9H305-2</id>
        <name>2</name>
        <sequence type="described" ref="VSP_046929"/>
    </isoform>
    <isoform>
        <id>Q9H305-3</id>
        <name>3</name>
        <sequence type="described" ref="VSP_046928"/>
    </isoform>
</comment>
<comment type="tissue specificity">
    <text evidence="4">Highly expressed in brain. Expressed at lower level in heart, skeletal muscle, kidney, pancreas and liver. Weakly or not expressed in placenta and lung.</text>
</comment>
<comment type="induction">
    <text evidence="5">Up-regulated by p53/TP53.</text>
</comment>
<comment type="domain">
    <text evidence="1">The LITAF domain is stabilized by a bound zinc ion. The LITAF domain contains an amphipathic helix that mediates interaction with lipid membranes.</text>
</comment>
<comment type="miscellaneous">
    <molecule>Isoform 2</molecule>
    <text evidence="8">May be due to competing acceptor splice site.</text>
</comment>
<comment type="similarity">
    <text evidence="8">Belongs to the CDIP1/LITAF family.</text>
</comment>
<comment type="sequence caution" evidence="8">
    <conflict type="frameshift">
        <sequence resource="EMBL-CDS" id="AAF26619"/>
    </conflict>
</comment>
<keyword id="KW-0025">Alternative splicing</keyword>
<keyword id="KW-0053">Apoptosis</keyword>
<keyword id="KW-0967">Endosome</keyword>
<keyword id="KW-0458">Lysosome</keyword>
<keyword id="KW-0472">Membrane</keyword>
<keyword id="KW-0479">Metal-binding</keyword>
<keyword id="KW-1267">Proteomics identification</keyword>
<keyword id="KW-1185">Reference proteome</keyword>
<keyword id="KW-0862">Zinc</keyword>
<feature type="chain" id="PRO_0000280336" description="Cell death-inducing p53-target protein 1">
    <location>
        <begin position="1"/>
        <end position="208"/>
    </location>
</feature>
<feature type="domain" description="LITAF" evidence="2">
    <location>
        <begin position="122"/>
        <end position="206"/>
    </location>
</feature>
<feature type="region of interest" description="Disordered" evidence="3">
    <location>
        <begin position="1"/>
        <end position="71"/>
    </location>
</feature>
<feature type="region of interest" description="Membrane-binding amphipathic helix" evidence="8">
    <location>
        <begin position="164"/>
        <end position="184"/>
    </location>
</feature>
<feature type="compositionally biased region" description="Pro residues" evidence="3">
    <location>
        <begin position="1"/>
        <end position="13"/>
    </location>
</feature>
<feature type="compositionally biased region" description="Pro residues" evidence="3">
    <location>
        <begin position="36"/>
        <end position="67"/>
    </location>
</feature>
<feature type="binding site" evidence="1">
    <location>
        <position position="142"/>
    </location>
    <ligand>
        <name>Zn(2+)</name>
        <dbReference type="ChEBI" id="CHEBI:29105"/>
    </ligand>
</feature>
<feature type="binding site" evidence="1">
    <location>
        <position position="145"/>
    </location>
    <ligand>
        <name>Zn(2+)</name>
        <dbReference type="ChEBI" id="CHEBI:29105"/>
    </ligand>
</feature>
<feature type="binding site" evidence="1">
    <location>
        <position position="194"/>
    </location>
    <ligand>
        <name>Zn(2+)</name>
        <dbReference type="ChEBI" id="CHEBI:29105"/>
    </ligand>
</feature>
<feature type="binding site" evidence="1">
    <location>
        <position position="197"/>
    </location>
    <ligand>
        <name>Zn(2+)</name>
        <dbReference type="ChEBI" id="CHEBI:29105"/>
    </ligand>
</feature>
<feature type="splice variant" id="VSP_046928" description="In isoform 3." evidence="7">
    <location>
        <begin position="42"/>
        <end position="120"/>
    </location>
</feature>
<feature type="splice variant" id="VSP_046929" description="In isoform 2." evidence="7">
    <location>
        <begin position="82"/>
        <end position="120"/>
    </location>
</feature>
<feature type="sequence conflict" description="In Ref. 4; CAB66633 and 5; CAG38477." evidence="8" ref="4 5">
    <original>T</original>
    <variation>A</variation>
    <location>
        <position position="150"/>
    </location>
</feature>
<sequence length="208" mass="21892">MSSEPPPPYPGGPTAPLLEEKSGAPPTPGRSSPAVMQPPPGMPLPPADIGPPPYEPPGHPMPQPGFIPPHMSADGTYMPPGFYPPPGPHPPMGYYPPGPYTPGPYPGPGGHTATVLVPSGAATTVTVLQGEIFEGAPVQTVCPHCQQAITTKISYEIGLMNFVLGFFCCFMGCDLGCCLIPCLINDFKDVTHTCPSCKAYIYTYKRLC</sequence>
<gene>
    <name type="primary">CDIP1</name>
    <name type="synonym">C16orf5</name>
    <name type="synonym">CDIP</name>
    <name type="synonym">LITAFL</name>
</gene>
<evidence type="ECO:0000250" key="1">
    <source>
        <dbReference type="UniProtKB" id="Q99732"/>
    </source>
</evidence>
<evidence type="ECO:0000255" key="2">
    <source>
        <dbReference type="PROSITE-ProRule" id="PRU01181"/>
    </source>
</evidence>
<evidence type="ECO:0000256" key="3">
    <source>
        <dbReference type="SAM" id="MobiDB-lite"/>
    </source>
</evidence>
<evidence type="ECO:0000269" key="4">
    <source>
    </source>
</evidence>
<evidence type="ECO:0000269" key="5">
    <source>
    </source>
</evidence>
<evidence type="ECO:0000269" key="6">
    <source>
    </source>
</evidence>
<evidence type="ECO:0000303" key="7">
    <source>
    </source>
</evidence>
<evidence type="ECO:0000305" key="8"/>